<accession>Q5LN53</accession>
<keyword id="KW-0963">Cytoplasm</keyword>
<keyword id="KW-0479">Metal-binding</keyword>
<keyword id="KW-0520">NAD</keyword>
<keyword id="KW-0560">Oxidoreductase</keyword>
<keyword id="KW-1185">Reference proteome</keyword>
<keyword id="KW-0862">Zinc</keyword>
<protein>
    <recommendedName>
        <fullName evidence="2">L-threonine 3-dehydrogenase</fullName>
        <shortName evidence="2">TDH</shortName>
        <ecNumber evidence="2">1.1.1.103</ecNumber>
    </recommendedName>
</protein>
<reference key="1">
    <citation type="journal article" date="2004" name="Nature">
        <title>Genome sequence of Silicibacter pomeroyi reveals adaptations to the marine environment.</title>
        <authorList>
            <person name="Moran M.A."/>
            <person name="Buchan A."/>
            <person name="Gonzalez J.M."/>
            <person name="Heidelberg J.F."/>
            <person name="Whitman W.B."/>
            <person name="Kiene R.P."/>
            <person name="Henriksen J.R."/>
            <person name="King G.M."/>
            <person name="Belas R."/>
            <person name="Fuqua C."/>
            <person name="Brinkac L.M."/>
            <person name="Lewis M."/>
            <person name="Johri S."/>
            <person name="Weaver B."/>
            <person name="Pai G."/>
            <person name="Eisen J.A."/>
            <person name="Rahe E."/>
            <person name="Sheldon W.M."/>
            <person name="Ye W."/>
            <person name="Miller T.R."/>
            <person name="Carlton J."/>
            <person name="Rasko D.A."/>
            <person name="Paulsen I.T."/>
            <person name="Ren Q."/>
            <person name="Daugherty S.C."/>
            <person name="DeBoy R.T."/>
            <person name="Dodson R.J."/>
            <person name="Durkin A.S."/>
            <person name="Madupu R."/>
            <person name="Nelson W.C."/>
            <person name="Sullivan S.A."/>
            <person name="Rosovitz M.J."/>
            <person name="Haft D.H."/>
            <person name="Selengut J."/>
            <person name="Ward N."/>
        </authorList>
    </citation>
    <scope>NUCLEOTIDE SEQUENCE [LARGE SCALE GENOMIC DNA]</scope>
    <source>
        <strain>ATCC 700808 / DSM 15171 / DSS-3</strain>
    </source>
</reference>
<reference key="2">
    <citation type="journal article" date="2014" name="Stand. Genomic Sci.">
        <title>An updated genome annotation for the model marine bacterium Ruegeria pomeroyi DSS-3.</title>
        <authorList>
            <person name="Rivers A.R."/>
            <person name="Smith C.B."/>
            <person name="Moran M.A."/>
        </authorList>
    </citation>
    <scope>GENOME REANNOTATION</scope>
    <source>
        <strain>ATCC 700808 / DSM 15171 / DSS-3</strain>
    </source>
</reference>
<organism>
    <name type="scientific">Ruegeria pomeroyi (strain ATCC 700808 / DSM 15171 / DSS-3)</name>
    <name type="common">Silicibacter pomeroyi</name>
    <dbReference type="NCBI Taxonomy" id="246200"/>
    <lineage>
        <taxon>Bacteria</taxon>
        <taxon>Pseudomonadati</taxon>
        <taxon>Pseudomonadota</taxon>
        <taxon>Alphaproteobacteria</taxon>
        <taxon>Rhodobacterales</taxon>
        <taxon>Roseobacteraceae</taxon>
        <taxon>Ruegeria</taxon>
    </lineage>
</organism>
<dbReference type="EC" id="1.1.1.103" evidence="2"/>
<dbReference type="EMBL" id="CP000031">
    <property type="protein sequence ID" value="AAV96586.1"/>
    <property type="status" value="ALT_INIT"/>
    <property type="molecule type" value="Genomic_DNA"/>
</dbReference>
<dbReference type="RefSeq" id="WP_044029362.1">
    <property type="nucleotide sequence ID" value="NC_003911.12"/>
</dbReference>
<dbReference type="SMR" id="Q5LN53"/>
<dbReference type="STRING" id="246200.SPO3359"/>
<dbReference type="PaxDb" id="246200-SPO3359"/>
<dbReference type="KEGG" id="sil:SPO3359"/>
<dbReference type="eggNOG" id="COG1063">
    <property type="taxonomic scope" value="Bacteria"/>
</dbReference>
<dbReference type="HOGENOM" id="CLU_026673_11_0_5"/>
<dbReference type="OrthoDB" id="9809185at2"/>
<dbReference type="UniPathway" id="UPA00046">
    <property type="reaction ID" value="UER00505"/>
</dbReference>
<dbReference type="Proteomes" id="UP000001023">
    <property type="component" value="Chromosome"/>
</dbReference>
<dbReference type="GO" id="GO:0005737">
    <property type="term" value="C:cytoplasm"/>
    <property type="evidence" value="ECO:0007669"/>
    <property type="project" value="UniProtKB-SubCell"/>
</dbReference>
<dbReference type="GO" id="GO:0008743">
    <property type="term" value="F:L-threonine 3-dehydrogenase activity"/>
    <property type="evidence" value="ECO:0007669"/>
    <property type="project" value="UniProtKB-EC"/>
</dbReference>
<dbReference type="GO" id="GO:0008270">
    <property type="term" value="F:zinc ion binding"/>
    <property type="evidence" value="ECO:0007669"/>
    <property type="project" value="InterPro"/>
</dbReference>
<dbReference type="GO" id="GO:0019518">
    <property type="term" value="P:L-threonine catabolic process to glycine"/>
    <property type="evidence" value="ECO:0007669"/>
    <property type="project" value="UniProtKB-UniPathway"/>
</dbReference>
<dbReference type="Gene3D" id="3.90.180.10">
    <property type="entry name" value="Medium-chain alcohol dehydrogenases, catalytic domain"/>
    <property type="match status" value="1"/>
</dbReference>
<dbReference type="Gene3D" id="3.40.50.720">
    <property type="entry name" value="NAD(P)-binding Rossmann-like Domain"/>
    <property type="match status" value="1"/>
</dbReference>
<dbReference type="InterPro" id="IPR013149">
    <property type="entry name" value="ADH-like_C"/>
</dbReference>
<dbReference type="InterPro" id="IPR013154">
    <property type="entry name" value="ADH-like_N"/>
</dbReference>
<dbReference type="InterPro" id="IPR002328">
    <property type="entry name" value="ADH_Zn_CS"/>
</dbReference>
<dbReference type="InterPro" id="IPR011032">
    <property type="entry name" value="GroES-like_sf"/>
</dbReference>
<dbReference type="InterPro" id="IPR036291">
    <property type="entry name" value="NAD(P)-bd_dom_sf"/>
</dbReference>
<dbReference type="InterPro" id="IPR020843">
    <property type="entry name" value="PKS_ER"/>
</dbReference>
<dbReference type="InterPro" id="IPR050129">
    <property type="entry name" value="Zn_alcohol_dh"/>
</dbReference>
<dbReference type="NCBIfam" id="NF003808">
    <property type="entry name" value="PRK05396.1"/>
    <property type="match status" value="1"/>
</dbReference>
<dbReference type="PANTHER" id="PTHR43401">
    <property type="entry name" value="L-THREONINE 3-DEHYDROGENASE"/>
    <property type="match status" value="1"/>
</dbReference>
<dbReference type="PANTHER" id="PTHR43401:SF2">
    <property type="entry name" value="L-THREONINE 3-DEHYDROGENASE"/>
    <property type="match status" value="1"/>
</dbReference>
<dbReference type="Pfam" id="PF08240">
    <property type="entry name" value="ADH_N"/>
    <property type="match status" value="1"/>
</dbReference>
<dbReference type="Pfam" id="PF00107">
    <property type="entry name" value="ADH_zinc_N"/>
    <property type="match status" value="1"/>
</dbReference>
<dbReference type="SMART" id="SM00829">
    <property type="entry name" value="PKS_ER"/>
    <property type="match status" value="1"/>
</dbReference>
<dbReference type="SUPFAM" id="SSF50129">
    <property type="entry name" value="GroES-like"/>
    <property type="match status" value="1"/>
</dbReference>
<dbReference type="SUPFAM" id="SSF51735">
    <property type="entry name" value="NAD(P)-binding Rossmann-fold domains"/>
    <property type="match status" value="1"/>
</dbReference>
<dbReference type="PROSITE" id="PS00059">
    <property type="entry name" value="ADH_ZINC"/>
    <property type="match status" value="1"/>
</dbReference>
<comment type="function">
    <text evidence="2">Catalyzes the NAD(+)-dependent oxidation of L-threonine to 2-amino-3-ketobutyrate.</text>
</comment>
<comment type="catalytic activity">
    <reaction evidence="2">
        <text>L-threonine + NAD(+) = (2S)-2-amino-3-oxobutanoate + NADH + H(+)</text>
        <dbReference type="Rhea" id="RHEA:13161"/>
        <dbReference type="ChEBI" id="CHEBI:15378"/>
        <dbReference type="ChEBI" id="CHEBI:57540"/>
        <dbReference type="ChEBI" id="CHEBI:57926"/>
        <dbReference type="ChEBI" id="CHEBI:57945"/>
        <dbReference type="ChEBI" id="CHEBI:78948"/>
        <dbReference type="EC" id="1.1.1.103"/>
    </reaction>
</comment>
<comment type="cofactor">
    <cofactor evidence="2">
        <name>Zn(2+)</name>
        <dbReference type="ChEBI" id="CHEBI:29105"/>
    </cofactor>
    <text evidence="3">Binds 1 Zn(2+) ion per subunit.</text>
</comment>
<comment type="pathway">
    <text evidence="2">Amino-acid degradation; L-threonine degradation via oxydo-reductase pathway; glycine from L-threonine: step 1/2.</text>
</comment>
<comment type="subunit">
    <text evidence="2">Homotetramer.</text>
</comment>
<comment type="subcellular location">
    <subcellularLocation>
        <location evidence="2">Cytoplasm</location>
    </subcellularLocation>
</comment>
<comment type="similarity">
    <text evidence="3">Belongs to the zinc-containing alcohol dehydrogenase family.</text>
</comment>
<comment type="sequence caution" evidence="3">
    <conflict type="erroneous initiation">
        <sequence resource="EMBL-CDS" id="AAV96586"/>
    </conflict>
</comment>
<feature type="chain" id="PRO_0000160858" description="L-threonine 3-dehydrogenase">
    <location>
        <begin position="1"/>
        <end position="342"/>
    </location>
</feature>
<feature type="active site" description="Charge relay system" evidence="1">
    <location>
        <position position="40"/>
    </location>
</feature>
<feature type="active site" description="Charge relay system" evidence="1">
    <location>
        <position position="43"/>
    </location>
</feature>
<feature type="binding site" evidence="1">
    <location>
        <position position="38"/>
    </location>
    <ligand>
        <name>Zn(2+)</name>
        <dbReference type="ChEBI" id="CHEBI:29105"/>
        <note>catalytic</note>
    </ligand>
</feature>
<feature type="binding site" evidence="1">
    <location>
        <position position="63"/>
    </location>
    <ligand>
        <name>Zn(2+)</name>
        <dbReference type="ChEBI" id="CHEBI:29105"/>
        <note>catalytic</note>
    </ligand>
</feature>
<feature type="binding site" evidence="1">
    <location>
        <position position="64"/>
    </location>
    <ligand>
        <name>Zn(2+)</name>
        <dbReference type="ChEBI" id="CHEBI:29105"/>
        <note>catalytic</note>
    </ligand>
</feature>
<feature type="binding site" evidence="1">
    <location>
        <position position="175"/>
    </location>
    <ligand>
        <name>NAD(+)</name>
        <dbReference type="ChEBI" id="CHEBI:57540"/>
    </ligand>
</feature>
<feature type="binding site" evidence="1">
    <location>
        <position position="195"/>
    </location>
    <ligand>
        <name>NAD(+)</name>
        <dbReference type="ChEBI" id="CHEBI:57540"/>
    </ligand>
</feature>
<feature type="binding site" evidence="1">
    <location>
        <position position="200"/>
    </location>
    <ligand>
        <name>NAD(+)</name>
        <dbReference type="ChEBI" id="CHEBI:57540"/>
    </ligand>
</feature>
<feature type="binding site" evidence="1">
    <location>
        <begin position="263"/>
        <end position="265"/>
    </location>
    <ligand>
        <name>NAD(+)</name>
        <dbReference type="ChEBI" id="CHEBI:57540"/>
    </ligand>
</feature>
<feature type="binding site" evidence="1">
    <location>
        <begin position="287"/>
        <end position="288"/>
    </location>
    <ligand>
        <name>NAD(+)</name>
        <dbReference type="ChEBI" id="CHEBI:57540"/>
    </ligand>
</feature>
<feature type="site" description="Important for catalytic activity for the proton relay mechanism but does not participate directly in the coordination of zinc atom" evidence="1">
    <location>
        <position position="148"/>
    </location>
</feature>
<gene>
    <name evidence="2" type="primary">tdh</name>
    <name type="ordered locus">SPO3359</name>
</gene>
<proteinExistence type="inferred from homology"/>
<evidence type="ECO:0000250" key="1">
    <source>
        <dbReference type="UniProtKB" id="O58389"/>
    </source>
</evidence>
<evidence type="ECO:0000250" key="2">
    <source>
        <dbReference type="UniProtKB" id="P07913"/>
    </source>
</evidence>
<evidence type="ECO:0000305" key="3"/>
<sequence>MKALEKSKPEEGLWMVQAPVPEIGPDDVLIKIKKTGICGTDIHIWNWDEWAAHTVPVPMITGHEFAGEIVELGRDVTGLSIGQRVSGEGHLIGTESRQSRAGKFHLDPGTRGIGVNVQGAFAQYLRLPAFNVVPLPEDIPDEIGAILDPLGNAVHTALSFDLLGEDVLITGAGPIGIMAAAVAKHAGARHVVITDINADRLKLAQHVVPRARTVDVTREDLGDVVHELGLKQGFDVGLEMSGSQAALDQMVEALVMGGKIALLGIPPGKSPVDWSRIVFKAITIKGVYGREMFETWYKMIAMLQNGLDVSRVITHRFGVDEFREGFAAMKSGLSGKVVLDWT</sequence>
<name>TDH_RUEPO</name>